<gene>
    <name evidence="1" type="primary">nrdR</name>
    <name type="ordered locus">Syncc9605_0469</name>
</gene>
<name>NRDR_SYNSC</name>
<reference key="1">
    <citation type="submission" date="2005-07" db="EMBL/GenBank/DDBJ databases">
        <title>Complete sequence of Synechococcus sp. CC9605.</title>
        <authorList>
            <consortium name="US DOE Joint Genome Institute"/>
            <person name="Copeland A."/>
            <person name="Lucas S."/>
            <person name="Lapidus A."/>
            <person name="Barry K."/>
            <person name="Detter J.C."/>
            <person name="Glavina T."/>
            <person name="Hammon N."/>
            <person name="Israni S."/>
            <person name="Pitluck S."/>
            <person name="Schmutz J."/>
            <person name="Martinez M."/>
            <person name="Larimer F."/>
            <person name="Land M."/>
            <person name="Kyrpides N."/>
            <person name="Ivanova N."/>
            <person name="Richardson P."/>
        </authorList>
    </citation>
    <scope>NUCLEOTIDE SEQUENCE [LARGE SCALE GENOMIC DNA]</scope>
    <source>
        <strain>CC9605</strain>
    </source>
</reference>
<feature type="chain" id="PRO_0000264222" description="Transcriptional repressor NrdR">
    <location>
        <begin position="1"/>
        <end position="160"/>
    </location>
</feature>
<feature type="domain" description="ATP-cone" evidence="1">
    <location>
        <begin position="49"/>
        <end position="139"/>
    </location>
</feature>
<feature type="zinc finger region" evidence="1">
    <location>
        <begin position="3"/>
        <end position="34"/>
    </location>
</feature>
<protein>
    <recommendedName>
        <fullName evidence="1">Transcriptional repressor NrdR</fullName>
    </recommendedName>
</protein>
<keyword id="KW-0067">ATP-binding</keyword>
<keyword id="KW-0238">DNA-binding</keyword>
<keyword id="KW-0479">Metal-binding</keyword>
<keyword id="KW-0547">Nucleotide-binding</keyword>
<keyword id="KW-0678">Repressor</keyword>
<keyword id="KW-0804">Transcription</keyword>
<keyword id="KW-0805">Transcription regulation</keyword>
<keyword id="KW-0862">Zinc</keyword>
<keyword id="KW-0863">Zinc-finger</keyword>
<organism>
    <name type="scientific">Synechococcus sp. (strain CC9605)</name>
    <dbReference type="NCBI Taxonomy" id="110662"/>
    <lineage>
        <taxon>Bacteria</taxon>
        <taxon>Bacillati</taxon>
        <taxon>Cyanobacteriota</taxon>
        <taxon>Cyanophyceae</taxon>
        <taxon>Synechococcales</taxon>
        <taxon>Synechococcaceae</taxon>
        <taxon>Synechococcus</taxon>
    </lineage>
</organism>
<comment type="function">
    <text evidence="1">Negatively regulates transcription of bacterial ribonucleotide reductase nrd genes and operons by binding to NrdR-boxes.</text>
</comment>
<comment type="cofactor">
    <cofactor evidence="1">
        <name>Zn(2+)</name>
        <dbReference type="ChEBI" id="CHEBI:29105"/>
    </cofactor>
    <text evidence="1">Binds 1 zinc ion.</text>
</comment>
<comment type="similarity">
    <text evidence="1">Belongs to the NrdR family.</text>
</comment>
<comment type="sequence caution" evidence="2">
    <conflict type="erroneous initiation">
        <sequence resource="EMBL-CDS" id="ABB34243"/>
    </conflict>
</comment>
<sequence length="160" mass="18490">MQCPSCQNTDSRVLESRAADGGRSVRRRRECLNCEFRFTTYERVETVPITVIKRNGNREIFSRSKLLHGLNRACEKTGLDTSRLESLVEELELRLQQRTGKEVSSTEIGEFVLRDLKQISEVAYIRFASVYRQFRGIDDFVSTLETLNADQEQNHLATVR</sequence>
<dbReference type="EMBL" id="CP000110">
    <property type="protein sequence ID" value="ABB34243.1"/>
    <property type="status" value="ALT_INIT"/>
    <property type="molecule type" value="Genomic_DNA"/>
</dbReference>
<dbReference type="RefSeq" id="WP_041434368.1">
    <property type="nucleotide sequence ID" value="NC_007516.1"/>
</dbReference>
<dbReference type="SMR" id="Q3AMD9"/>
<dbReference type="STRING" id="110662.Syncc9605_0469"/>
<dbReference type="KEGG" id="syd:Syncc9605_0469"/>
<dbReference type="eggNOG" id="COG1327">
    <property type="taxonomic scope" value="Bacteria"/>
</dbReference>
<dbReference type="HOGENOM" id="CLU_108412_0_0_3"/>
<dbReference type="OrthoDB" id="9807461at2"/>
<dbReference type="GO" id="GO:0005524">
    <property type="term" value="F:ATP binding"/>
    <property type="evidence" value="ECO:0007669"/>
    <property type="project" value="UniProtKB-KW"/>
</dbReference>
<dbReference type="GO" id="GO:0003677">
    <property type="term" value="F:DNA binding"/>
    <property type="evidence" value="ECO:0007669"/>
    <property type="project" value="UniProtKB-KW"/>
</dbReference>
<dbReference type="GO" id="GO:0008270">
    <property type="term" value="F:zinc ion binding"/>
    <property type="evidence" value="ECO:0007669"/>
    <property type="project" value="UniProtKB-UniRule"/>
</dbReference>
<dbReference type="GO" id="GO:0045892">
    <property type="term" value="P:negative regulation of DNA-templated transcription"/>
    <property type="evidence" value="ECO:0007669"/>
    <property type="project" value="UniProtKB-UniRule"/>
</dbReference>
<dbReference type="HAMAP" id="MF_00440">
    <property type="entry name" value="NrdR"/>
    <property type="match status" value="1"/>
</dbReference>
<dbReference type="InterPro" id="IPR005144">
    <property type="entry name" value="ATP-cone_dom"/>
</dbReference>
<dbReference type="InterPro" id="IPR055173">
    <property type="entry name" value="NrdR-like_N"/>
</dbReference>
<dbReference type="InterPro" id="IPR003796">
    <property type="entry name" value="RNR_NrdR-like"/>
</dbReference>
<dbReference type="NCBIfam" id="TIGR00244">
    <property type="entry name" value="transcriptional regulator NrdR"/>
    <property type="match status" value="1"/>
</dbReference>
<dbReference type="PANTHER" id="PTHR30455">
    <property type="entry name" value="TRANSCRIPTIONAL REPRESSOR NRDR"/>
    <property type="match status" value="1"/>
</dbReference>
<dbReference type="PANTHER" id="PTHR30455:SF2">
    <property type="entry name" value="TRANSCRIPTIONAL REPRESSOR NRDR"/>
    <property type="match status" value="1"/>
</dbReference>
<dbReference type="Pfam" id="PF03477">
    <property type="entry name" value="ATP-cone"/>
    <property type="match status" value="1"/>
</dbReference>
<dbReference type="Pfam" id="PF22811">
    <property type="entry name" value="Zn_ribbon_NrdR"/>
    <property type="match status" value="1"/>
</dbReference>
<dbReference type="PROSITE" id="PS51161">
    <property type="entry name" value="ATP_CONE"/>
    <property type="match status" value="1"/>
</dbReference>
<proteinExistence type="inferred from homology"/>
<accession>Q3AMD9</accession>
<evidence type="ECO:0000255" key="1">
    <source>
        <dbReference type="HAMAP-Rule" id="MF_00440"/>
    </source>
</evidence>
<evidence type="ECO:0000305" key="2"/>